<feature type="chain" id="PRO_0000159977" description="Superoxide dismutase [Mn/Fe]">
    <location>
        <begin position="1"/>
        <end position="15" status="greater than"/>
    </location>
</feature>
<feature type="non-terminal residue" evidence="3">
    <location>
        <position position="15"/>
    </location>
</feature>
<evidence type="ECO:0000250" key="1"/>
<evidence type="ECO:0000250" key="2">
    <source>
        <dbReference type="UniProtKB" id="P53652"/>
    </source>
</evidence>
<evidence type="ECO:0000305" key="3"/>
<sequence length="15" mass="1695">MEHTLPPLXYAIDAL</sequence>
<dbReference type="EC" id="1.15.1.1"/>
<dbReference type="GO" id="GO:0030145">
    <property type="term" value="F:manganese ion binding"/>
    <property type="evidence" value="ECO:0000250"/>
    <property type="project" value="UniProtKB"/>
</dbReference>
<dbReference type="GO" id="GO:0004784">
    <property type="term" value="F:superoxide dismutase activity"/>
    <property type="evidence" value="ECO:0000250"/>
    <property type="project" value="UniProtKB"/>
</dbReference>
<dbReference type="GO" id="GO:0019430">
    <property type="term" value="P:removal of superoxide radicals"/>
    <property type="evidence" value="ECO:0000250"/>
    <property type="project" value="UniProtKB"/>
</dbReference>
<keyword id="KW-0903">Direct protein sequencing</keyword>
<keyword id="KW-0408">Iron</keyword>
<keyword id="KW-0464">Manganese</keyword>
<keyword id="KW-0479">Metal-binding</keyword>
<keyword id="KW-0560">Oxidoreductase</keyword>
<name>SODF_DELAC</name>
<accession>P83707</accession>
<comment type="function">
    <text>Destroys superoxide anion radicals which are normally produced within the cells and which are toxic to biological systems.</text>
</comment>
<comment type="catalytic activity">
    <reaction evidence="2">
        <text>2 superoxide + 2 H(+) = H2O2 + O2</text>
        <dbReference type="Rhea" id="RHEA:20696"/>
        <dbReference type="ChEBI" id="CHEBI:15378"/>
        <dbReference type="ChEBI" id="CHEBI:15379"/>
        <dbReference type="ChEBI" id="CHEBI:16240"/>
        <dbReference type="ChEBI" id="CHEBI:18421"/>
        <dbReference type="EC" id="1.15.1.1"/>
    </reaction>
</comment>
<comment type="cofactor">
    <cofactor evidence="1">
        <name>Mn(2+)</name>
        <dbReference type="ChEBI" id="CHEBI:29035"/>
    </cofactor>
    <cofactor evidence="1">
        <name>Fe(2+)</name>
        <dbReference type="ChEBI" id="CHEBI:29033"/>
    </cofactor>
    <text evidence="1">Binds 1 Mn(2+) or Fe(2+) ion per subunit.</text>
</comment>
<comment type="subunit">
    <text evidence="2">Homodimer.</text>
</comment>
<comment type="similarity">
    <text evidence="3">Belongs to the iron/manganese superoxide dismutase family.</text>
</comment>
<protein>
    <recommendedName>
        <fullName>Superoxide dismutase [Mn/Fe]</fullName>
        <ecNumber>1.15.1.1</ecNumber>
    </recommendedName>
</protein>
<proteinExistence type="evidence at protein level"/>
<reference key="1">
    <citation type="journal article" date="2004" name="Microbiology">
        <title>Regulation of catabolic enzymes during long-term exposure of Delftia acidovorans MC1 to chlorophenoxy herbicides.</title>
        <authorList>
            <person name="Benndorf D."/>
            <person name="Davidson I."/>
            <person name="Babel W."/>
        </authorList>
    </citation>
    <scope>PROTEIN SEQUENCE</scope>
    <source>
        <strain>MC1</strain>
    </source>
</reference>
<organism evidence="3">
    <name type="scientific">Delftia acidovorans</name>
    <name type="common">Pseudomonas acidovorans</name>
    <name type="synonym">Comamonas acidovorans</name>
    <dbReference type="NCBI Taxonomy" id="80866"/>
    <lineage>
        <taxon>Bacteria</taxon>
        <taxon>Pseudomonadati</taxon>
        <taxon>Pseudomonadota</taxon>
        <taxon>Betaproteobacteria</taxon>
        <taxon>Burkholderiales</taxon>
        <taxon>Comamonadaceae</taxon>
        <taxon>Delftia</taxon>
    </lineage>
</organism>